<organism>
    <name type="scientific">Mycobacterium tuberculosis (strain CDC 1551 / Oshkosh)</name>
    <dbReference type="NCBI Taxonomy" id="83331"/>
    <lineage>
        <taxon>Bacteria</taxon>
        <taxon>Bacillati</taxon>
        <taxon>Actinomycetota</taxon>
        <taxon>Actinomycetes</taxon>
        <taxon>Mycobacteriales</taxon>
        <taxon>Mycobacteriaceae</taxon>
        <taxon>Mycobacterium</taxon>
        <taxon>Mycobacterium tuberculosis complex</taxon>
    </lineage>
</organism>
<evidence type="ECO:0000255" key="1"/>
<evidence type="ECO:0000305" key="2"/>
<sequence>MNFAVLPPEVNSARIFAGAGLGPMLAAASAWDGLAEELHAAAGSFASVTTGLTGDAWHGPASLAMTRAASPYVGWLNTAAGQAAQAAGQARLAASAFEATLAATVSPAMVAANRTRLASLVAANLLGQNAPAIAAAEAEYEQIWAQDVAAMFGYHSAASAVATQLAPIQEGLQQQLQNVLAQLASGNLGSGNVGVGNIGNDNIGNANIGFGNRGDANIGIGNIGDRNLGIGNTGNWNIGIGITGNGQIGFGKPANPDVLVVGNGGPGVTALVMGGTDSLLPLPNIPLLEYAARFITPVHPGYTATFLETPSQFFPFTGLNSLTYDVSVAQGVTNLHTAIMAQLAAGNEVVVFGTSQSATIATFEMRYLQSLPAHLRPGLDELSFTLTGNPNRPDGGILTRFGFSIPQLGFTLSGATPADAYPTVDYAFQYDGVNDFPKYPLNVFATANAIAGILFLHSGLIALPPDLASGVVQPVSSPDVLTTYILLPSQDLPLLVPLRAIPLLGNPLADLIQPDLRVLVELGYDRTAHQDVPSPFGLFPDVDWAEVAADLQQGAVQGVNDALSGLGLPPPWQPALPRLF</sequence>
<reference key="1">
    <citation type="journal article" date="2002" name="J. Bacteriol.">
        <title>Whole-genome comparison of Mycobacterium tuberculosis clinical and laboratory strains.</title>
        <authorList>
            <person name="Fleischmann R.D."/>
            <person name="Alland D."/>
            <person name="Eisen J.A."/>
            <person name="Carpenter L."/>
            <person name="White O."/>
            <person name="Peterson J.D."/>
            <person name="DeBoy R.T."/>
            <person name="Dodson R.J."/>
            <person name="Gwinn M.L."/>
            <person name="Haft D.H."/>
            <person name="Hickey E.K."/>
            <person name="Kolonay J.F."/>
            <person name="Nelson W.C."/>
            <person name="Umayam L.A."/>
            <person name="Ermolaeva M.D."/>
            <person name="Salzberg S.L."/>
            <person name="Delcher A."/>
            <person name="Utterback T.R."/>
            <person name="Weidman J.F."/>
            <person name="Khouri H.M."/>
            <person name="Gill J."/>
            <person name="Mikula A."/>
            <person name="Bishai W."/>
            <person name="Jacobs W.R. Jr."/>
            <person name="Venter J.C."/>
            <person name="Fraser C.M."/>
        </authorList>
    </citation>
    <scope>NUCLEOTIDE SEQUENCE [LARGE SCALE GENOMIC DNA]</scope>
    <source>
        <strain>CDC 1551 / Oshkosh</strain>
    </source>
</reference>
<accession>P9WHZ4</accession>
<accession>L0TA57</accession>
<accession>Q79FC6</accession>
<accession>Q7D6W9</accession>
<keyword id="KW-1185">Reference proteome</keyword>
<name>PPE42_MYCTO</name>
<gene>
    <name type="primary">PPE42</name>
    <name type="ordered locus">MT2683</name>
</gene>
<protein>
    <recommendedName>
        <fullName>Uncharacterized PPE family protein PPE42</fullName>
    </recommendedName>
</protein>
<dbReference type="EMBL" id="AE000516">
    <property type="protein sequence ID" value="AAK46999.1"/>
    <property type="molecule type" value="Genomic_DNA"/>
</dbReference>
<dbReference type="PIR" id="G70570">
    <property type="entry name" value="G70570"/>
</dbReference>
<dbReference type="RefSeq" id="WP_003917657.1">
    <property type="nucleotide sequence ID" value="NC_002755.2"/>
</dbReference>
<dbReference type="SMR" id="P9WHZ4"/>
<dbReference type="ESTHER" id="myctu-ppe42">
    <property type="family name" value="PE-PPE"/>
</dbReference>
<dbReference type="KEGG" id="mtc:MT2683"/>
<dbReference type="PATRIC" id="fig|83331.31.peg.2893"/>
<dbReference type="HOGENOM" id="CLU_028265_1_0_11"/>
<dbReference type="Proteomes" id="UP000001020">
    <property type="component" value="Chromosome"/>
</dbReference>
<dbReference type="GO" id="GO:0052572">
    <property type="term" value="P:response to host immune response"/>
    <property type="evidence" value="ECO:0007669"/>
    <property type="project" value="TreeGrafter"/>
</dbReference>
<dbReference type="FunFam" id="1.20.1260.20:FF:000001">
    <property type="entry name" value="PPE family protein PPE41"/>
    <property type="match status" value="1"/>
</dbReference>
<dbReference type="Gene3D" id="3.40.50.1820">
    <property type="entry name" value="alpha/beta hydrolase"/>
    <property type="match status" value="1"/>
</dbReference>
<dbReference type="Gene3D" id="1.20.1260.20">
    <property type="entry name" value="PPE superfamily"/>
    <property type="match status" value="1"/>
</dbReference>
<dbReference type="InterPro" id="IPR029058">
    <property type="entry name" value="AB_hydrolase_fold"/>
</dbReference>
<dbReference type="InterPro" id="IPR013228">
    <property type="entry name" value="PE-PPE_C"/>
</dbReference>
<dbReference type="InterPro" id="IPR000030">
    <property type="entry name" value="PPE_dom"/>
</dbReference>
<dbReference type="InterPro" id="IPR038332">
    <property type="entry name" value="PPE_sf"/>
</dbReference>
<dbReference type="PANTHER" id="PTHR46766">
    <property type="entry name" value="GLUTAMINE-RICH PROTEIN 2"/>
    <property type="match status" value="1"/>
</dbReference>
<dbReference type="PANTHER" id="PTHR46766:SF1">
    <property type="entry name" value="GLUTAMINE-RICH PROTEIN 2"/>
    <property type="match status" value="1"/>
</dbReference>
<dbReference type="Pfam" id="PF08237">
    <property type="entry name" value="PE-PPE"/>
    <property type="match status" value="1"/>
</dbReference>
<dbReference type="Pfam" id="PF00823">
    <property type="entry name" value="PPE"/>
    <property type="match status" value="1"/>
</dbReference>
<dbReference type="SUPFAM" id="SSF140459">
    <property type="entry name" value="PE/PPE dimer-like"/>
    <property type="match status" value="1"/>
</dbReference>
<feature type="chain" id="PRO_0000428096" description="Uncharacterized PPE family protein PPE42">
    <location>
        <begin position="1"/>
        <end position="580"/>
    </location>
</feature>
<feature type="domain" description="PE-PPE" evidence="1">
    <location>
        <begin position="300"/>
        <end position="525"/>
    </location>
</feature>
<proteinExistence type="inferred from homology"/>
<comment type="similarity">
    <text evidence="2">Belongs to the mycobacterial PPE family.</text>
</comment>